<reference key="1">
    <citation type="journal article" date="2000" name="Nature">
        <title>Sequence and analysis of chromosome 1 of the plant Arabidopsis thaliana.</title>
        <authorList>
            <person name="Theologis A."/>
            <person name="Ecker J.R."/>
            <person name="Palm C.J."/>
            <person name="Federspiel N.A."/>
            <person name="Kaul S."/>
            <person name="White O."/>
            <person name="Alonso J."/>
            <person name="Altafi H."/>
            <person name="Araujo R."/>
            <person name="Bowman C.L."/>
            <person name="Brooks S.Y."/>
            <person name="Buehler E."/>
            <person name="Chan A."/>
            <person name="Chao Q."/>
            <person name="Chen H."/>
            <person name="Cheuk R.F."/>
            <person name="Chin C.W."/>
            <person name="Chung M.K."/>
            <person name="Conn L."/>
            <person name="Conway A.B."/>
            <person name="Conway A.R."/>
            <person name="Creasy T.H."/>
            <person name="Dewar K."/>
            <person name="Dunn P."/>
            <person name="Etgu P."/>
            <person name="Feldblyum T.V."/>
            <person name="Feng J.-D."/>
            <person name="Fong B."/>
            <person name="Fujii C.Y."/>
            <person name="Gill J.E."/>
            <person name="Goldsmith A.D."/>
            <person name="Haas B."/>
            <person name="Hansen N.F."/>
            <person name="Hughes B."/>
            <person name="Huizar L."/>
            <person name="Hunter J.L."/>
            <person name="Jenkins J."/>
            <person name="Johnson-Hopson C."/>
            <person name="Khan S."/>
            <person name="Khaykin E."/>
            <person name="Kim C.J."/>
            <person name="Koo H.L."/>
            <person name="Kremenetskaia I."/>
            <person name="Kurtz D.B."/>
            <person name="Kwan A."/>
            <person name="Lam B."/>
            <person name="Langin-Hooper S."/>
            <person name="Lee A."/>
            <person name="Lee J.M."/>
            <person name="Lenz C.A."/>
            <person name="Li J.H."/>
            <person name="Li Y.-P."/>
            <person name="Lin X."/>
            <person name="Liu S.X."/>
            <person name="Liu Z.A."/>
            <person name="Luros J.S."/>
            <person name="Maiti R."/>
            <person name="Marziali A."/>
            <person name="Militscher J."/>
            <person name="Miranda M."/>
            <person name="Nguyen M."/>
            <person name="Nierman W.C."/>
            <person name="Osborne B.I."/>
            <person name="Pai G."/>
            <person name="Peterson J."/>
            <person name="Pham P.K."/>
            <person name="Rizzo M."/>
            <person name="Rooney T."/>
            <person name="Rowley D."/>
            <person name="Sakano H."/>
            <person name="Salzberg S.L."/>
            <person name="Schwartz J.R."/>
            <person name="Shinn P."/>
            <person name="Southwick A.M."/>
            <person name="Sun H."/>
            <person name="Tallon L.J."/>
            <person name="Tambunga G."/>
            <person name="Toriumi M.J."/>
            <person name="Town C.D."/>
            <person name="Utterback T."/>
            <person name="Van Aken S."/>
            <person name="Vaysberg M."/>
            <person name="Vysotskaia V.S."/>
            <person name="Walker M."/>
            <person name="Wu D."/>
            <person name="Yu G."/>
            <person name="Fraser C.M."/>
            <person name="Venter J.C."/>
            <person name="Davis R.W."/>
        </authorList>
    </citation>
    <scope>NUCLEOTIDE SEQUENCE [LARGE SCALE GENOMIC DNA]</scope>
    <source>
        <strain>cv. Columbia</strain>
    </source>
</reference>
<reference key="2">
    <citation type="journal article" date="2017" name="Plant J.">
        <title>Araport11: a complete reannotation of the Arabidopsis thaliana reference genome.</title>
        <authorList>
            <person name="Cheng C.Y."/>
            <person name="Krishnakumar V."/>
            <person name="Chan A.P."/>
            <person name="Thibaud-Nissen F."/>
            <person name="Schobel S."/>
            <person name="Town C.D."/>
        </authorList>
    </citation>
    <scope>GENOME REANNOTATION</scope>
    <source>
        <strain>cv. Columbia</strain>
    </source>
</reference>
<reference key="3">
    <citation type="journal article" date="2003" name="Science">
        <title>Empirical analysis of transcriptional activity in the Arabidopsis genome.</title>
        <authorList>
            <person name="Yamada K."/>
            <person name="Lim J."/>
            <person name="Dale J.M."/>
            <person name="Chen H."/>
            <person name="Shinn P."/>
            <person name="Palm C.J."/>
            <person name="Southwick A.M."/>
            <person name="Wu H.C."/>
            <person name="Kim C.J."/>
            <person name="Nguyen M."/>
            <person name="Pham P.K."/>
            <person name="Cheuk R.F."/>
            <person name="Karlin-Newmann G."/>
            <person name="Liu S.X."/>
            <person name="Lam B."/>
            <person name="Sakano H."/>
            <person name="Wu T."/>
            <person name="Yu G."/>
            <person name="Miranda M."/>
            <person name="Quach H.L."/>
            <person name="Tripp M."/>
            <person name="Chang C.H."/>
            <person name="Lee J.M."/>
            <person name="Toriumi M.J."/>
            <person name="Chan M.M."/>
            <person name="Tang C.C."/>
            <person name="Onodera C.S."/>
            <person name="Deng J.M."/>
            <person name="Akiyama K."/>
            <person name="Ansari Y."/>
            <person name="Arakawa T."/>
            <person name="Banh J."/>
            <person name="Banno F."/>
            <person name="Bowser L."/>
            <person name="Brooks S.Y."/>
            <person name="Carninci P."/>
            <person name="Chao Q."/>
            <person name="Choy N."/>
            <person name="Enju A."/>
            <person name="Goldsmith A.D."/>
            <person name="Gurjal M."/>
            <person name="Hansen N.F."/>
            <person name="Hayashizaki Y."/>
            <person name="Johnson-Hopson C."/>
            <person name="Hsuan V.W."/>
            <person name="Iida K."/>
            <person name="Karnes M."/>
            <person name="Khan S."/>
            <person name="Koesema E."/>
            <person name="Ishida J."/>
            <person name="Jiang P.X."/>
            <person name="Jones T."/>
            <person name="Kawai J."/>
            <person name="Kamiya A."/>
            <person name="Meyers C."/>
            <person name="Nakajima M."/>
            <person name="Narusaka M."/>
            <person name="Seki M."/>
            <person name="Sakurai T."/>
            <person name="Satou M."/>
            <person name="Tamse R."/>
            <person name="Vaysberg M."/>
            <person name="Wallender E.K."/>
            <person name="Wong C."/>
            <person name="Yamamura Y."/>
            <person name="Yuan S."/>
            <person name="Shinozaki K."/>
            <person name="Davis R.W."/>
            <person name="Theologis A."/>
            <person name="Ecker J.R."/>
        </authorList>
    </citation>
    <scope>NUCLEOTIDE SEQUENCE [LARGE SCALE MRNA]</scope>
    <source>
        <strain>cv. Columbia</strain>
    </source>
</reference>
<reference key="4">
    <citation type="submission" date="2004-09" db="EMBL/GenBank/DDBJ databases">
        <title>Large-scale analysis of RIKEN Arabidopsis full-length (RAFL) cDNAs.</title>
        <authorList>
            <person name="Totoki Y."/>
            <person name="Seki M."/>
            <person name="Ishida J."/>
            <person name="Nakajima M."/>
            <person name="Enju A."/>
            <person name="Kamiya A."/>
            <person name="Narusaka M."/>
            <person name="Shin-i T."/>
            <person name="Nakagawa M."/>
            <person name="Sakamoto N."/>
            <person name="Oishi K."/>
            <person name="Kohara Y."/>
            <person name="Kobayashi M."/>
            <person name="Toyoda A."/>
            <person name="Sakaki Y."/>
            <person name="Sakurai T."/>
            <person name="Iida K."/>
            <person name="Akiyama K."/>
            <person name="Satou M."/>
            <person name="Toyoda T."/>
            <person name="Konagaya A."/>
            <person name="Carninci P."/>
            <person name="Kawai J."/>
            <person name="Hayashizaki Y."/>
            <person name="Shinozaki K."/>
        </authorList>
    </citation>
    <scope>NUCLEOTIDE SEQUENCE [LARGE SCALE MRNA]</scope>
    <source>
        <strain>cv. Columbia</strain>
    </source>
</reference>
<reference key="5">
    <citation type="journal article" date="2008" name="J. Exp. Bot.">
        <title>The synthesis of the rhamnogalacturonan II component 3-deoxy-D-manno-2-octulosonic acid (Kdo) is required for pollen tube growth and elongation.</title>
        <authorList>
            <person name="Delmas F."/>
            <person name="Seveno M."/>
            <person name="Northey J.G."/>
            <person name="Hernould M."/>
            <person name="Lerouge P."/>
            <person name="McCourt P."/>
            <person name="Chevalier C."/>
        </authorList>
    </citation>
    <scope>FUNCTION</scope>
    <scope>TISSUE SPECIFICITY</scope>
</reference>
<reference key="6">
    <citation type="journal article" date="2012" name="Mol. Cell. Proteomics">
        <title>Comparative large-scale characterisation of plant vs. mammal proteins reveals similar and idiosyncratic N-alpha acetylation features.</title>
        <authorList>
            <person name="Bienvenut W.V."/>
            <person name="Sumpton D."/>
            <person name="Martinez A."/>
            <person name="Lilla S."/>
            <person name="Espagne C."/>
            <person name="Meinnel T."/>
            <person name="Giglione C."/>
        </authorList>
    </citation>
    <scope>ACETYLATION [LARGE SCALE ANALYSIS] AT ALA-2</scope>
    <scope>CLEAVAGE OF INITIATOR METHIONINE [LARGE SCALE ANALYSIS]</scope>
    <scope>IDENTIFICATION BY MASS SPECTROMETRY [LARGE SCALE ANALYSIS]</scope>
</reference>
<keyword id="KW-0007">Acetylation</keyword>
<keyword id="KW-0025">Alternative splicing</keyword>
<keyword id="KW-0961">Cell wall biogenesis/degradation</keyword>
<keyword id="KW-0963">Cytoplasm</keyword>
<keyword id="KW-1185">Reference proteome</keyword>
<keyword id="KW-0808">Transferase</keyword>
<evidence type="ECO:0000250" key="1"/>
<evidence type="ECO:0000250" key="2">
    <source>
        <dbReference type="UniProtKB" id="Q9AV97"/>
    </source>
</evidence>
<evidence type="ECO:0000269" key="3">
    <source>
    </source>
</evidence>
<evidence type="ECO:0000305" key="4"/>
<evidence type="ECO:0007744" key="5">
    <source>
    </source>
</evidence>
<proteinExistence type="evidence at protein level"/>
<gene>
    <name type="primary">KDSA2</name>
    <name type="synonym">kdsA</name>
    <name type="ordered locus">At1g16340</name>
    <name type="ORF">F3O9.14</name>
</gene>
<dbReference type="EC" id="2.5.1.55" evidence="2"/>
<dbReference type="EMBL" id="AC006341">
    <property type="protein sequence ID" value="AAD34685.1"/>
    <property type="status" value="ALT_SEQ"/>
    <property type="molecule type" value="Genomic_DNA"/>
</dbReference>
<dbReference type="EMBL" id="CP002684">
    <property type="protein sequence ID" value="AEE29437.1"/>
    <property type="molecule type" value="Genomic_DNA"/>
</dbReference>
<dbReference type="EMBL" id="CP002684">
    <property type="protein sequence ID" value="AEE29438.1"/>
    <property type="molecule type" value="Genomic_DNA"/>
</dbReference>
<dbReference type="EMBL" id="CP002684">
    <property type="protein sequence ID" value="AEE29439.1"/>
    <property type="molecule type" value="Genomic_DNA"/>
</dbReference>
<dbReference type="EMBL" id="BT010438">
    <property type="protein sequence ID" value="AAQ62439.1"/>
    <property type="molecule type" value="mRNA"/>
</dbReference>
<dbReference type="EMBL" id="AK175407">
    <property type="protein sequence ID" value="BAD43170.1"/>
    <property type="molecule type" value="mRNA"/>
</dbReference>
<dbReference type="PIR" id="E86298">
    <property type="entry name" value="E86298"/>
</dbReference>
<dbReference type="RefSeq" id="NP_001031055.1">
    <molecule id="Q6NQL4-1"/>
    <property type="nucleotide sequence ID" value="NM_001035978.2"/>
</dbReference>
<dbReference type="RefSeq" id="NP_001077547.1">
    <molecule id="Q6NQL4-1"/>
    <property type="nucleotide sequence ID" value="NM_001084078.1"/>
</dbReference>
<dbReference type="RefSeq" id="NP_173084.1">
    <molecule id="Q6NQL4-1"/>
    <property type="nucleotide sequence ID" value="NM_101500.4"/>
</dbReference>
<dbReference type="SMR" id="Q6NQL4"/>
<dbReference type="BioGRID" id="23443">
    <property type="interactions" value="1"/>
</dbReference>
<dbReference type="FunCoup" id="Q6NQL4">
    <property type="interactions" value="366"/>
</dbReference>
<dbReference type="STRING" id="3702.Q6NQL4"/>
<dbReference type="iPTMnet" id="Q6NQL4"/>
<dbReference type="MetOSite" id="Q6NQL4"/>
<dbReference type="PaxDb" id="3702-AT1G16340.4"/>
<dbReference type="ProteomicsDB" id="250757">
    <molecule id="Q6NQL4-1"/>
</dbReference>
<dbReference type="EnsemblPlants" id="AT1G16340.1">
    <molecule id="Q6NQL4-1"/>
    <property type="protein sequence ID" value="AT1G16340.1"/>
    <property type="gene ID" value="AT1G16340"/>
</dbReference>
<dbReference type="EnsemblPlants" id="AT1G16340.2">
    <molecule id="Q6NQL4-1"/>
    <property type="protein sequence ID" value="AT1G16340.2"/>
    <property type="gene ID" value="AT1G16340"/>
</dbReference>
<dbReference type="EnsemblPlants" id="AT1G16340.3">
    <molecule id="Q6NQL4-1"/>
    <property type="protein sequence ID" value="AT1G16340.3"/>
    <property type="gene ID" value="AT1G16340"/>
</dbReference>
<dbReference type="GeneID" id="838203"/>
<dbReference type="Gramene" id="AT1G16340.1">
    <molecule id="Q6NQL4-1"/>
    <property type="protein sequence ID" value="AT1G16340.1"/>
    <property type="gene ID" value="AT1G16340"/>
</dbReference>
<dbReference type="Gramene" id="AT1G16340.2">
    <molecule id="Q6NQL4-1"/>
    <property type="protein sequence ID" value="AT1G16340.2"/>
    <property type="gene ID" value="AT1G16340"/>
</dbReference>
<dbReference type="Gramene" id="AT1G16340.3">
    <molecule id="Q6NQL4-1"/>
    <property type="protein sequence ID" value="AT1G16340.3"/>
    <property type="gene ID" value="AT1G16340"/>
</dbReference>
<dbReference type="KEGG" id="ath:AT1G16340"/>
<dbReference type="Araport" id="AT1G16340"/>
<dbReference type="TAIR" id="AT1G16340">
    <property type="gene designation" value="ATKDSA2"/>
</dbReference>
<dbReference type="eggNOG" id="ENOG502QQN7">
    <property type="taxonomic scope" value="Eukaryota"/>
</dbReference>
<dbReference type="InParanoid" id="Q6NQL4"/>
<dbReference type="PhylomeDB" id="Q6NQL4"/>
<dbReference type="BioCyc" id="ARA:AT1G16340-MONOMER"/>
<dbReference type="BRENDA" id="2.5.1.55">
    <property type="organism ID" value="399"/>
</dbReference>
<dbReference type="PRO" id="PR:Q6NQL4"/>
<dbReference type="Proteomes" id="UP000006548">
    <property type="component" value="Chromosome 1"/>
</dbReference>
<dbReference type="ExpressionAtlas" id="Q6NQL4">
    <property type="expression patterns" value="baseline and differential"/>
</dbReference>
<dbReference type="GO" id="GO:0005737">
    <property type="term" value="C:cytoplasm"/>
    <property type="evidence" value="ECO:0007669"/>
    <property type="project" value="UniProtKB-SubCell"/>
</dbReference>
<dbReference type="GO" id="GO:0008676">
    <property type="term" value="F:3-deoxy-8-phosphooctulonate synthase activity"/>
    <property type="evidence" value="ECO:0000314"/>
    <property type="project" value="UniProtKB"/>
</dbReference>
<dbReference type="GO" id="GO:0046364">
    <property type="term" value="P:monosaccharide biosynthetic process"/>
    <property type="evidence" value="ECO:0000314"/>
    <property type="project" value="UniProtKB"/>
</dbReference>
<dbReference type="GO" id="GO:0048868">
    <property type="term" value="P:pollen tube development"/>
    <property type="evidence" value="ECO:0000315"/>
    <property type="project" value="UniProtKB"/>
</dbReference>
<dbReference type="GO" id="GO:0009860">
    <property type="term" value="P:pollen tube growth"/>
    <property type="evidence" value="ECO:0000315"/>
    <property type="project" value="UniProtKB"/>
</dbReference>
<dbReference type="GO" id="GO:0010306">
    <property type="term" value="P:rhamnogalacturonan II biosynthetic process"/>
    <property type="evidence" value="ECO:0000304"/>
    <property type="project" value="UniProtKB"/>
</dbReference>
<dbReference type="FunFam" id="3.20.20.70:FF:000254">
    <property type="entry name" value="2-dehydro-3-deoxyphosphooctonate aldolase 2"/>
    <property type="match status" value="1"/>
</dbReference>
<dbReference type="Gene3D" id="3.20.20.70">
    <property type="entry name" value="Aldolase class I"/>
    <property type="match status" value="1"/>
</dbReference>
<dbReference type="HAMAP" id="MF_00056">
    <property type="entry name" value="KDO8P_synth"/>
    <property type="match status" value="1"/>
</dbReference>
<dbReference type="InterPro" id="IPR013785">
    <property type="entry name" value="Aldolase_TIM"/>
</dbReference>
<dbReference type="InterPro" id="IPR006218">
    <property type="entry name" value="DAHP1/KDSA"/>
</dbReference>
<dbReference type="InterPro" id="IPR006269">
    <property type="entry name" value="KDO8P_synthase"/>
</dbReference>
<dbReference type="NCBIfam" id="TIGR01362">
    <property type="entry name" value="KDO8P_synth"/>
    <property type="match status" value="1"/>
</dbReference>
<dbReference type="NCBIfam" id="NF003543">
    <property type="entry name" value="PRK05198.1"/>
    <property type="match status" value="1"/>
</dbReference>
<dbReference type="PANTHER" id="PTHR21057">
    <property type="entry name" value="PHOSPHO-2-DEHYDRO-3-DEOXYHEPTONATE ALDOLASE"/>
    <property type="match status" value="1"/>
</dbReference>
<dbReference type="Pfam" id="PF00793">
    <property type="entry name" value="DAHP_synth_1"/>
    <property type="match status" value="1"/>
</dbReference>
<dbReference type="SUPFAM" id="SSF51569">
    <property type="entry name" value="Aldolase"/>
    <property type="match status" value="1"/>
</dbReference>
<protein>
    <recommendedName>
        <fullName>2-dehydro-3-deoxyphosphooctonate aldolase 2</fullName>
        <ecNumber evidence="2">2.5.1.55</ecNumber>
    </recommendedName>
    <alternativeName>
        <fullName>3-deoxy-D-manno-octulosonic acid 8-phosphate synthase</fullName>
    </alternativeName>
    <alternativeName>
        <fullName>KDO-8-phosphate synthase 2</fullName>
        <shortName>AtkdsA2</shortName>
        <shortName>KDO 8-P synthase</shortName>
        <shortName>KDOPS</shortName>
    </alternativeName>
    <alternativeName>
        <fullName>Phospho-2-dehydro-3-deoxyoctonate aldolase</fullName>
    </alternativeName>
</protein>
<comment type="function">
    <text evidence="3">Catalyzes the stereospecific condensation of D-arabinose 5-phosphate and phosphoenolpyruvate to form 3-deoxy-D-manno-octulosonate 8-phosphate (KDO-8-phosphate) and inorganic phosphate. Involved in the biosynthesis of 3-deoxy-D-manno-octulosonate (KDO) which is an indispensable component of rhamnogalacturonan II (RG-II), a structurally complex pectic polysaccharide of the primary cell wall. RG-II is essential for the cell wall integrity of rapidly growing tissues and pollen tube growth and elongation.</text>
</comment>
<comment type="catalytic activity">
    <reaction evidence="2">
        <text>D-arabinose 5-phosphate + phosphoenolpyruvate + H2O = 3-deoxy-alpha-D-manno-2-octulosonate-8-phosphate + phosphate</text>
        <dbReference type="Rhea" id="RHEA:14053"/>
        <dbReference type="ChEBI" id="CHEBI:15377"/>
        <dbReference type="ChEBI" id="CHEBI:43474"/>
        <dbReference type="ChEBI" id="CHEBI:57693"/>
        <dbReference type="ChEBI" id="CHEBI:58702"/>
        <dbReference type="ChEBI" id="CHEBI:85985"/>
        <dbReference type="EC" id="2.5.1.55"/>
    </reaction>
</comment>
<comment type="subcellular location">
    <subcellularLocation>
        <location evidence="1">Cytoplasm</location>
    </subcellularLocation>
</comment>
<comment type="alternative products">
    <event type="alternative splicing"/>
    <isoform>
        <id>Q6NQL4-1</id>
        <name>1</name>
        <sequence type="displayed"/>
    </isoform>
    <text>A number of isoforms are produced. According to EST sequences.</text>
</comment>
<comment type="tissue specificity">
    <text evidence="3">Expressed in roots, apical meristem, emerging leaves, hydathodes of young leaves, styles of mature flowers and funicules of mature siliques.</text>
</comment>
<comment type="similarity">
    <text evidence="4">Belongs to the KdsA family.</text>
</comment>
<comment type="sequence caution" evidence="4">
    <conflict type="erroneous gene model prediction">
        <sequence resource="EMBL-CDS" id="AAD34685"/>
    </conflict>
</comment>
<name>KDSA2_ARATH</name>
<accession>Q6NQL4</accession>
<accession>Q9SA33</accession>
<organism>
    <name type="scientific">Arabidopsis thaliana</name>
    <name type="common">Mouse-ear cress</name>
    <dbReference type="NCBI Taxonomy" id="3702"/>
    <lineage>
        <taxon>Eukaryota</taxon>
        <taxon>Viridiplantae</taxon>
        <taxon>Streptophyta</taxon>
        <taxon>Embryophyta</taxon>
        <taxon>Tracheophyta</taxon>
        <taxon>Spermatophyta</taxon>
        <taxon>Magnoliopsida</taxon>
        <taxon>eudicotyledons</taxon>
        <taxon>Gunneridae</taxon>
        <taxon>Pentapetalae</taxon>
        <taxon>rosids</taxon>
        <taxon>malvids</taxon>
        <taxon>Brassicales</taxon>
        <taxon>Brassicaceae</taxon>
        <taxon>Camelineae</taxon>
        <taxon>Arabidopsis</taxon>
    </lineage>
</organism>
<sequence>MANSASLLYDQLKVAEPFFLLAGPNVIESEEHVLRMAKSIKDISTKLGLPLVFKSSFDKANRTSSKSFRGPGMAEGLKILEKVKVAFDLPIVTDVHESSQCEAVGKVADIIQIPAFLCRQTDLLVAAAQSGKIINIKKGQFCGHSVMRNSAEKVRLAGNPNVMVCERGTMFGYNDLIVDPRNLEWMREADCPVVADITHSLQQPAGKKLDGGGVASGGLRELIPCIARTAVAVGVDGIFMEVHDDPLNAPVDGPTQWPLRHLEELLEELIAIASVTKGKQQFQIDLTPYRD</sequence>
<feature type="initiator methionine" description="Removed" evidence="5">
    <location>
        <position position="1"/>
    </location>
</feature>
<feature type="chain" id="PRO_0000421463" description="2-dehydro-3-deoxyphosphooctonate aldolase 2">
    <location>
        <begin position="2"/>
        <end position="291"/>
    </location>
</feature>
<feature type="modified residue" description="N-acetylalanine" evidence="5">
    <location>
        <position position="2"/>
    </location>
</feature>